<feature type="chain" id="PRO_0000337089" description="MIF4G domain-containing protein">
    <location>
        <begin position="1"/>
        <end position="222"/>
    </location>
</feature>
<feature type="domain" description="MIF4G">
    <location>
        <begin position="3"/>
        <end position="205"/>
    </location>
</feature>
<feature type="splice variant" id="VSP_033877" description="In isoform 2." evidence="3">
    <original>K</original>
    <variation>KVACFETEDGEYSVCQRSYSNCSRLMPSRCNTQYR</variation>
    <location>
        <position position="27"/>
    </location>
</feature>
<feature type="splice variant" id="VSP_047408" description="In isoform 3." evidence="2 4">
    <original>K</original>
    <variation>KAPSLECTVACFETEDGEYSVCQRSYSNCSRLMPSRCNTQYR</variation>
    <location>
        <position position="27"/>
    </location>
</feature>
<accession>A9UHW6</accession>
<accession>B4DUM7</accession>
<accession>Q8N4Q5</accession>
<accession>Q9HBL5</accession>
<comment type="function">
    <text evidence="1">Functions in replication-dependent translation of histone mRNAs which differ from other eukaryotic mRNAs in that they do not end with a poly-A tail but a stem-loop. May participate in circularizing those mRNAs specifically enhancing their translation.</text>
</comment>
<comment type="subunit">
    <text evidence="1">Interacts with EIF4G1, EIF4G2 and SLBP; probably tethered by SLBP to the 3'-end of mRNAs ending with the histone stem-loop, it also interacts with EIF4G1 which is bound to their 5'-end.</text>
</comment>
<comment type="interaction">
    <interactant intactId="EBI-373498">
        <id>A9UHW6</id>
    </interactant>
    <interactant intactId="EBI-740301">
        <id>Q9NUU7</id>
        <label>DDX19A</label>
    </interactant>
    <organismsDiffer>false</organismsDiffer>
    <experiments>9</experiments>
</comment>
<comment type="interaction">
    <interactant intactId="EBI-373498">
        <id>A9UHW6</id>
    </interactant>
    <interactant intactId="EBI-719232">
        <id>Q9UMR2</id>
        <label>DDX19B</label>
    </interactant>
    <organismsDiffer>false</organismsDiffer>
    <experiments>13</experiments>
</comment>
<comment type="interaction">
    <interactant intactId="EBI-373498">
        <id>A9UHW6</id>
    </interactant>
    <interactant intactId="EBI-366632">
        <id>O75821</id>
        <label>EIF3G</label>
    </interactant>
    <organismsDiffer>false</organismsDiffer>
    <experiments>2</experiments>
</comment>
<comment type="interaction">
    <interactant intactId="EBI-373498">
        <id>A9UHW6</id>
    </interactant>
    <interactant intactId="EBI-5459222">
        <id>Q8IV48</id>
        <label>ERI1</label>
    </interactant>
    <organismsDiffer>false</organismsDiffer>
    <experiments>2</experiments>
</comment>
<comment type="interaction">
    <interactant intactId="EBI-373498">
        <id>A9UHW6</id>
    </interactant>
    <interactant intactId="EBI-308629">
        <id>P56524</id>
        <label>HDAC4</label>
    </interactant>
    <organismsDiffer>false</organismsDiffer>
    <experiments>4</experiments>
</comment>
<comment type="interaction">
    <interactant intactId="EBI-373498">
        <id>A9UHW6</id>
    </interactant>
    <interactant intactId="EBI-740220">
        <id>O14964</id>
        <label>HGS</label>
    </interactant>
    <organismsDiffer>false</organismsDiffer>
    <experiments>5</experiments>
</comment>
<comment type="interaction">
    <interactant intactId="EBI-373498">
        <id>A9UHW6</id>
    </interactant>
    <interactant intactId="EBI-373498">
        <id>A9UHW6</id>
        <label>MIF4GD</label>
    </interactant>
    <organismsDiffer>false</organismsDiffer>
    <experiments>6</experiments>
</comment>
<comment type="interaction">
    <interactant intactId="EBI-373498">
        <id>A9UHW6</id>
    </interactant>
    <interactant intactId="EBI-447544">
        <id>P01106</id>
        <label>MYC</label>
    </interactant>
    <organismsDiffer>false</organismsDiffer>
    <experiments>2</experiments>
</comment>
<comment type="interaction">
    <interactant intactId="EBI-373498">
        <id>A9UHW6</id>
    </interactant>
    <interactant intactId="EBI-1105124">
        <id>Q5VU43</id>
        <label>PDE4DIP</label>
    </interactant>
    <organismsDiffer>false</organismsDiffer>
    <experiments>3</experiments>
</comment>
<comment type="interaction">
    <interactant intactId="EBI-373498">
        <id>A9UHW6</id>
    </interactant>
    <interactant intactId="EBI-2696402">
        <id>Q14493</id>
        <label>SLBP</label>
    </interactant>
    <organismsDiffer>false</organismsDiffer>
    <experiments>10</experiments>
</comment>
<comment type="interaction">
    <interactant intactId="EBI-373498">
        <id>A9UHW6</id>
    </interactant>
    <interactant intactId="EBI-25487672">
        <id>PRO_0000037314</id>
        <label>rep</label>
        <dbReference type="UniProtKB" id="P0C6X7"/>
    </interactant>
    <organismsDiffer>true</organismsDiffer>
    <experiments>2</experiments>
</comment>
<comment type="interaction">
    <interactant intactId="EBI-9118295">
        <id>A9UHW6-2</id>
    </interactant>
    <interactant intactId="EBI-745213">
        <id>P29972</id>
        <label>AQP1</label>
    </interactant>
    <organismsDiffer>false</organismsDiffer>
    <experiments>3</experiments>
</comment>
<comment type="interaction">
    <interactant intactId="EBI-9118295">
        <id>A9UHW6-2</id>
    </interactant>
    <interactant intactId="EBI-1166928">
        <id>Q8N5M1</id>
        <label>ATPAF2</label>
    </interactant>
    <organismsDiffer>false</organismsDiffer>
    <experiments>3</experiments>
</comment>
<comment type="interaction">
    <interactant intactId="EBI-9118295">
        <id>A9UHW6-2</id>
    </interactant>
    <interactant intactId="EBI-749051">
        <id>Q8IYR0</id>
        <label>CFAP206</label>
    </interactant>
    <organismsDiffer>false</organismsDiffer>
    <experiments>3</experiments>
</comment>
<comment type="interaction">
    <interactant intactId="EBI-9118295">
        <id>A9UHW6-2</id>
    </interactant>
    <interactant intactId="EBI-2321769">
        <id>Q9Y6H1</id>
        <label>CHCHD2</label>
    </interactant>
    <organismsDiffer>false</organismsDiffer>
    <experiments>3</experiments>
</comment>
<comment type="interaction">
    <interactant intactId="EBI-9118295">
        <id>A9UHW6-2</id>
    </interactant>
    <interactant intactId="EBI-7519711">
        <id>P53673</id>
        <label>CRYBA4</label>
    </interactant>
    <organismsDiffer>false</organismsDiffer>
    <experiments>3</experiments>
</comment>
<comment type="interaction">
    <interactant intactId="EBI-9118295">
        <id>A9UHW6-2</id>
    </interactant>
    <interactant intactId="EBI-12180013">
        <id>O43310-2</id>
        <label>CTIF</label>
    </interactant>
    <organismsDiffer>false</organismsDiffer>
    <experiments>3</experiments>
</comment>
<comment type="interaction">
    <interactant intactId="EBI-9118295">
        <id>A9UHW6-2</id>
    </interactant>
    <interactant intactId="EBI-740301">
        <id>Q9NUU7</id>
        <label>DDX19A</label>
    </interactant>
    <organismsDiffer>false</organismsDiffer>
    <experiments>3</experiments>
</comment>
<comment type="interaction">
    <interactant intactId="EBI-9118295">
        <id>A9UHW6-2</id>
    </interactant>
    <interactant intactId="EBI-719232">
        <id>Q9UMR2</id>
        <label>DDX19B</label>
    </interactant>
    <organismsDiffer>false</organismsDiffer>
    <experiments>6</experiments>
</comment>
<comment type="interaction">
    <interactant intactId="EBI-9118295">
        <id>A9UHW6-2</id>
    </interactant>
    <interactant intactId="EBI-366632">
        <id>O75821</id>
        <label>EIF3G</label>
    </interactant>
    <organismsDiffer>false</organismsDiffer>
    <experiments>3</experiments>
</comment>
<comment type="interaction">
    <interactant intactId="EBI-9118295">
        <id>A9UHW6-2</id>
    </interactant>
    <interactant intactId="EBI-744099">
        <id>Q9H0I2</id>
        <label>ENKD1</label>
    </interactant>
    <organismsDiffer>false</organismsDiffer>
    <experiments>3</experiments>
</comment>
<comment type="interaction">
    <interactant intactId="EBI-9118295">
        <id>A9UHW6-2</id>
    </interactant>
    <interactant intactId="EBI-1752811">
        <id>Q9BQ89</id>
        <label>FAM110A</label>
    </interactant>
    <organismsDiffer>false</organismsDiffer>
    <experiments>3</experiments>
</comment>
<comment type="interaction">
    <interactant intactId="EBI-9118295">
        <id>A9UHW6-2</id>
    </interactant>
    <interactant intactId="EBI-16429135">
        <id>A0A0S2Z4Q4</id>
        <label>HGS</label>
    </interactant>
    <organismsDiffer>false</organismsDiffer>
    <experiments>3</experiments>
</comment>
<comment type="interaction">
    <interactant intactId="EBI-9118295">
        <id>A9UHW6-2</id>
    </interactant>
    <interactant intactId="EBI-740220">
        <id>O14964</id>
        <label>HGS</label>
    </interactant>
    <organismsDiffer>false</organismsDiffer>
    <experiments>6</experiments>
</comment>
<comment type="interaction">
    <interactant intactId="EBI-9118295">
        <id>A9UHW6-2</id>
    </interactant>
    <interactant intactId="EBI-2340269">
        <id>Q13064</id>
        <label>MKRN3</label>
    </interactant>
    <organismsDiffer>false</organismsDiffer>
    <experiments>3</experiments>
</comment>
<comment type="interaction">
    <interactant intactId="EBI-9118295">
        <id>A9UHW6-2</id>
    </interactant>
    <interactant intactId="EBI-741158">
        <id>Q96HA8</id>
        <label>NTAQ1</label>
    </interactant>
    <organismsDiffer>false</organismsDiffer>
    <experiments>3</experiments>
</comment>
<comment type="subcellular location">
    <subcellularLocation>
        <location evidence="1">Cytoplasm</location>
    </subcellularLocation>
    <subcellularLocation>
        <location evidence="1">Nucleus</location>
    </subcellularLocation>
</comment>
<comment type="alternative products">
    <event type="alternative splicing"/>
    <isoform>
        <id>A9UHW6-1</id>
        <name>1</name>
        <sequence type="displayed"/>
    </isoform>
    <isoform>
        <id>A9UHW6-2</id>
        <name>2</name>
        <sequence type="described" ref="VSP_033877"/>
    </isoform>
    <isoform>
        <id>A9UHW6-3</id>
        <name>3</name>
        <sequence type="described" ref="VSP_047408"/>
    </isoform>
</comment>
<comment type="miscellaneous">
    <text>Depletion of MIF4GD results in cell death and reduced histone mRNA translation.</text>
</comment>
<comment type="similarity">
    <text evidence="5">Belongs to the MIF4GD family.</text>
</comment>
<comment type="sequence caution" evidence="5">
    <conflict type="frameshift">
        <sequence resource="EMBL-CDS" id="AAG09724"/>
    </conflict>
</comment>
<keyword id="KW-0025">Alternative splicing</keyword>
<keyword id="KW-0963">Cytoplasm</keyword>
<keyword id="KW-0539">Nucleus</keyword>
<keyword id="KW-1267">Proteomics identification</keyword>
<keyword id="KW-1185">Reference proteome</keyword>
<keyword id="KW-0810">Translation regulation</keyword>
<protein>
    <recommendedName>
        <fullName>MIF4G domain-containing protein</fullName>
    </recommendedName>
    <alternativeName>
        <fullName>SLBP-interacting protein 1</fullName>
        <shortName>hSLIP1</shortName>
    </alternativeName>
</protein>
<proteinExistence type="evidence at protein level"/>
<gene>
    <name type="primary">MIF4GD</name>
    <name type="synonym">SLIP1</name>
</gene>
<dbReference type="EMBL" id="EU287989">
    <property type="protein sequence ID" value="ABX83907.1"/>
    <property type="molecule type" value="mRNA"/>
</dbReference>
<dbReference type="EMBL" id="AL555095">
    <property type="status" value="NOT_ANNOTATED_CDS"/>
    <property type="molecule type" value="mRNA"/>
</dbReference>
<dbReference type="EMBL" id="AK300711">
    <property type="protein sequence ID" value="BAG62389.1"/>
    <property type="molecule type" value="mRNA"/>
</dbReference>
<dbReference type="EMBL" id="AC022211">
    <property type="status" value="NOT_ANNOTATED_CDS"/>
    <property type="molecule type" value="Genomic_DNA"/>
</dbReference>
<dbReference type="EMBL" id="CH471099">
    <property type="protein sequence ID" value="EAW89263.1"/>
    <property type="molecule type" value="Genomic_DNA"/>
</dbReference>
<dbReference type="EMBL" id="BC033759">
    <property type="protein sequence ID" value="AAH33759.1"/>
    <property type="molecule type" value="mRNA"/>
</dbReference>
<dbReference type="EMBL" id="AF225422">
    <property type="protein sequence ID" value="AAG09724.1"/>
    <property type="status" value="ALT_FRAME"/>
    <property type="molecule type" value="mRNA"/>
</dbReference>
<dbReference type="CCDS" id="CCDS11719.1">
    <molecule id="A9UHW6-2"/>
</dbReference>
<dbReference type="CCDS" id="CCDS56044.1">
    <molecule id="A9UHW6-1"/>
</dbReference>
<dbReference type="CCDS" id="CCDS58598.1">
    <molecule id="A9UHW6-3"/>
</dbReference>
<dbReference type="RefSeq" id="NP_001229427.1">
    <molecule id="A9UHW6-3"/>
    <property type="nucleotide sequence ID" value="NM_001242498.2"/>
</dbReference>
<dbReference type="RefSeq" id="NP_001229429.1">
    <molecule id="A9UHW6-2"/>
    <property type="nucleotide sequence ID" value="NM_001242500.1"/>
</dbReference>
<dbReference type="RefSeq" id="NP_001229430.1">
    <molecule id="A9UHW6-1"/>
    <property type="nucleotide sequence ID" value="NM_001242501.1"/>
</dbReference>
<dbReference type="RefSeq" id="NP_001352680.1">
    <molecule id="A9UHW6-3"/>
    <property type="nucleotide sequence ID" value="NM_001365751.1"/>
</dbReference>
<dbReference type="RefSeq" id="NP_001352681.1">
    <molecule id="A9UHW6-1"/>
    <property type="nucleotide sequence ID" value="NM_001365752.1"/>
</dbReference>
<dbReference type="RefSeq" id="NP_001352682.1">
    <molecule id="A9UHW6-1"/>
    <property type="nucleotide sequence ID" value="NM_001365753.1"/>
</dbReference>
<dbReference type="RefSeq" id="NP_001352683.1">
    <molecule id="A9UHW6-1"/>
    <property type="nucleotide sequence ID" value="NM_001365754.1"/>
</dbReference>
<dbReference type="RefSeq" id="NP_001352684.1">
    <molecule id="A9UHW6-1"/>
    <property type="nucleotide sequence ID" value="NM_001365755.1"/>
</dbReference>
<dbReference type="RefSeq" id="NP_001357521.1">
    <molecule id="A9UHW6-1"/>
    <property type="nucleotide sequence ID" value="NM_001370592.1"/>
</dbReference>
<dbReference type="RefSeq" id="NP_065730.2">
    <molecule id="A9UHW6-2"/>
    <property type="nucleotide sequence ID" value="NM_020679.3"/>
</dbReference>
<dbReference type="RefSeq" id="XP_005257587.1">
    <property type="nucleotide sequence ID" value="XM_005257530.1"/>
</dbReference>
<dbReference type="RefSeq" id="XP_005257589.1">
    <property type="nucleotide sequence ID" value="XM_005257532.4"/>
</dbReference>
<dbReference type="RefSeq" id="XP_005257590.1">
    <property type="nucleotide sequence ID" value="XM_005257533.1"/>
</dbReference>
<dbReference type="RefSeq" id="XP_011523354.2">
    <molecule id="A9UHW6-2"/>
    <property type="nucleotide sequence ID" value="XM_011525052.3"/>
</dbReference>
<dbReference type="RefSeq" id="XP_016880382.1">
    <property type="nucleotide sequence ID" value="XM_017024893.1"/>
</dbReference>
<dbReference type="RefSeq" id="XP_016880383.1">
    <property type="nucleotide sequence ID" value="XM_017024894.1"/>
</dbReference>
<dbReference type="RefSeq" id="XP_047292406.1">
    <molecule id="A9UHW6-3"/>
    <property type="nucleotide sequence ID" value="XM_047436450.1"/>
</dbReference>
<dbReference type="RefSeq" id="XP_047292407.1">
    <molecule id="A9UHW6-3"/>
    <property type="nucleotide sequence ID" value="XM_047436451.1"/>
</dbReference>
<dbReference type="RefSeq" id="XP_054172702.1">
    <molecule id="A9UHW6-2"/>
    <property type="nucleotide sequence ID" value="XM_054316727.1"/>
</dbReference>
<dbReference type="RefSeq" id="XP_054172711.1">
    <molecule id="A9UHW6-3"/>
    <property type="nucleotide sequence ID" value="XM_054316736.1"/>
</dbReference>
<dbReference type="RefSeq" id="XP_054172712.1">
    <molecule id="A9UHW6-3"/>
    <property type="nucleotide sequence ID" value="XM_054316737.1"/>
</dbReference>
<dbReference type="SMR" id="A9UHW6"/>
<dbReference type="BioGRID" id="121511">
    <property type="interactions" value="52"/>
</dbReference>
<dbReference type="ComplexPortal" id="CPX-1313">
    <property type="entry name" value="SLBP-SLIP1 complex"/>
</dbReference>
<dbReference type="FunCoup" id="A9UHW6">
    <property type="interactions" value="1457"/>
</dbReference>
<dbReference type="IntAct" id="A9UHW6">
    <property type="interactions" value="41"/>
</dbReference>
<dbReference type="MINT" id="A9UHW6"/>
<dbReference type="STRING" id="9606.ENSP00000463334"/>
<dbReference type="iPTMnet" id="A9UHW6"/>
<dbReference type="PhosphoSitePlus" id="A9UHW6"/>
<dbReference type="BioMuta" id="MIF4GD"/>
<dbReference type="jPOST" id="A9UHW6"/>
<dbReference type="MassIVE" id="A9UHW6"/>
<dbReference type="PeptideAtlas" id="A9UHW6"/>
<dbReference type="ProteomicsDB" id="2507">
    <molecule id="A9UHW6-1"/>
</dbReference>
<dbReference type="ProteomicsDB" id="2508">
    <molecule id="A9UHW6-2"/>
</dbReference>
<dbReference type="Pumba" id="A9UHW6"/>
<dbReference type="Antibodypedia" id="32154">
    <property type="antibodies" value="143 antibodies from 19 providers"/>
</dbReference>
<dbReference type="DNASU" id="57409"/>
<dbReference type="Ensembl" id="ENST00000245551.9">
    <molecule id="A9UHW6-2"/>
    <property type="protein sequence ID" value="ENSP00000245551.5"/>
    <property type="gene ID" value="ENSG00000125457.15"/>
</dbReference>
<dbReference type="Ensembl" id="ENST00000325102.13">
    <molecule id="A9UHW6-1"/>
    <property type="protein sequence ID" value="ENSP00000321625.8"/>
    <property type="gene ID" value="ENSG00000125457.15"/>
</dbReference>
<dbReference type="Ensembl" id="ENST00000577542.5">
    <molecule id="A9UHW6-3"/>
    <property type="protein sequence ID" value="ENSP00000463334.1"/>
    <property type="gene ID" value="ENSG00000125457.15"/>
</dbReference>
<dbReference type="Ensembl" id="ENST00000579194.6">
    <molecule id="A9UHW6-3"/>
    <property type="protein sequence ID" value="ENSP00000462655.2"/>
    <property type="gene ID" value="ENSG00000125457.15"/>
</dbReference>
<dbReference type="Ensembl" id="ENST00000579297.5">
    <molecule id="A9UHW6-3"/>
    <property type="protein sequence ID" value="ENSP00000462459.1"/>
    <property type="gene ID" value="ENSG00000125457.15"/>
</dbReference>
<dbReference type="Ensembl" id="ENST00000618645.5">
    <molecule id="A9UHW6-1"/>
    <property type="protein sequence ID" value="ENSP00000484245.1"/>
    <property type="gene ID" value="ENSG00000125457.15"/>
</dbReference>
<dbReference type="GeneID" id="57409"/>
<dbReference type="KEGG" id="hsa:57409"/>
<dbReference type="MANE-Select" id="ENST00000325102.13">
    <property type="protein sequence ID" value="ENSP00000321625.8"/>
    <property type="RefSeq nucleotide sequence ID" value="NM_001370592.1"/>
    <property type="RefSeq protein sequence ID" value="NP_001357521.1"/>
</dbReference>
<dbReference type="UCSC" id="uc002jnp.5">
    <molecule id="A9UHW6-1"/>
    <property type="organism name" value="human"/>
</dbReference>
<dbReference type="AGR" id="HGNC:24030"/>
<dbReference type="CTD" id="57409"/>
<dbReference type="DisGeNET" id="57409"/>
<dbReference type="GeneCards" id="MIF4GD"/>
<dbReference type="HGNC" id="HGNC:24030">
    <property type="gene designation" value="MIF4GD"/>
</dbReference>
<dbReference type="HPA" id="ENSG00000125457">
    <property type="expression patterns" value="Low tissue specificity"/>
</dbReference>
<dbReference type="MIM" id="612072">
    <property type="type" value="gene"/>
</dbReference>
<dbReference type="neXtProt" id="NX_A9UHW6"/>
<dbReference type="OpenTargets" id="ENSG00000125457"/>
<dbReference type="PharmGKB" id="PA142671457"/>
<dbReference type="VEuPathDB" id="HostDB:ENSG00000125457"/>
<dbReference type="GeneTree" id="ENSGT00940000153432"/>
<dbReference type="InParanoid" id="A9UHW6"/>
<dbReference type="OrthoDB" id="6357832at2759"/>
<dbReference type="PAN-GO" id="A9UHW6">
    <property type="GO annotations" value="3 GO annotations based on evolutionary models"/>
</dbReference>
<dbReference type="PhylomeDB" id="A9UHW6"/>
<dbReference type="PathwayCommons" id="A9UHW6"/>
<dbReference type="SignaLink" id="A9UHW6"/>
<dbReference type="BioGRID-ORCS" id="57409">
    <property type="hits" value="18 hits in 1165 CRISPR screens"/>
</dbReference>
<dbReference type="GenomeRNAi" id="57409"/>
<dbReference type="Pharos" id="A9UHW6">
    <property type="development level" value="Tbio"/>
</dbReference>
<dbReference type="PRO" id="PR:A9UHW6"/>
<dbReference type="Proteomes" id="UP000005640">
    <property type="component" value="Chromosome 17"/>
</dbReference>
<dbReference type="RNAct" id="A9UHW6">
    <property type="molecule type" value="protein"/>
</dbReference>
<dbReference type="Bgee" id="ENSG00000125457">
    <property type="expression patterns" value="Expressed in upper arm skin and 188 other cell types or tissues"/>
</dbReference>
<dbReference type="ExpressionAtlas" id="A9UHW6">
    <property type="expression patterns" value="baseline and differential"/>
</dbReference>
<dbReference type="GO" id="GO:0005737">
    <property type="term" value="C:cytoplasm"/>
    <property type="evidence" value="ECO:0000303"/>
    <property type="project" value="ComplexPortal"/>
</dbReference>
<dbReference type="GO" id="GO:0005829">
    <property type="term" value="C:cytosol"/>
    <property type="evidence" value="ECO:0000314"/>
    <property type="project" value="HPA"/>
</dbReference>
<dbReference type="GO" id="GO:0005794">
    <property type="term" value="C:Golgi apparatus"/>
    <property type="evidence" value="ECO:0000314"/>
    <property type="project" value="HPA"/>
</dbReference>
<dbReference type="GO" id="GO:0062073">
    <property type="term" value="C:histone mRNA stem-loop binding complex"/>
    <property type="evidence" value="ECO:0000353"/>
    <property type="project" value="ComplexPortal"/>
</dbReference>
<dbReference type="GO" id="GO:0005730">
    <property type="term" value="C:nucleolus"/>
    <property type="evidence" value="ECO:0000314"/>
    <property type="project" value="HPA"/>
</dbReference>
<dbReference type="GO" id="GO:0042802">
    <property type="term" value="F:identical protein binding"/>
    <property type="evidence" value="ECO:0000353"/>
    <property type="project" value="IntAct"/>
</dbReference>
<dbReference type="GO" id="GO:0003723">
    <property type="term" value="F:RNA binding"/>
    <property type="evidence" value="ECO:0007669"/>
    <property type="project" value="InterPro"/>
</dbReference>
<dbReference type="GO" id="GO:0008494">
    <property type="term" value="F:translation activator activity"/>
    <property type="evidence" value="ECO:0000318"/>
    <property type="project" value="GO_Central"/>
</dbReference>
<dbReference type="GO" id="GO:0002191">
    <property type="term" value="P:cap-dependent translational initiation"/>
    <property type="evidence" value="ECO:0000314"/>
    <property type="project" value="ComplexPortal"/>
</dbReference>
<dbReference type="GO" id="GO:0006446">
    <property type="term" value="P:regulation of translational initiation"/>
    <property type="evidence" value="ECO:0000318"/>
    <property type="project" value="GO_Central"/>
</dbReference>
<dbReference type="FunFam" id="1.25.40.180:FF:000025">
    <property type="entry name" value="MIF4G domain containing a"/>
    <property type="match status" value="1"/>
</dbReference>
<dbReference type="Gene3D" id="1.25.40.180">
    <property type="match status" value="1"/>
</dbReference>
<dbReference type="InterPro" id="IPR016024">
    <property type="entry name" value="ARM-type_fold"/>
</dbReference>
<dbReference type="InterPro" id="IPR003890">
    <property type="entry name" value="MIF4G-like_typ-3"/>
</dbReference>
<dbReference type="InterPro" id="IPR051367">
    <property type="entry name" value="mRNA_TranslReg/HistoneTransl"/>
</dbReference>
<dbReference type="PANTHER" id="PTHR23254">
    <property type="entry name" value="EIF4G DOMAIN PROTEIN"/>
    <property type="match status" value="1"/>
</dbReference>
<dbReference type="PANTHER" id="PTHR23254:SF17">
    <property type="entry name" value="MIF4G DOMAIN-CONTAINING PROTEIN"/>
    <property type="match status" value="1"/>
</dbReference>
<dbReference type="Pfam" id="PF02854">
    <property type="entry name" value="MIF4G"/>
    <property type="match status" value="1"/>
</dbReference>
<dbReference type="SMART" id="SM00543">
    <property type="entry name" value="MIF4G"/>
    <property type="match status" value="1"/>
</dbReference>
<dbReference type="SUPFAM" id="SSF48371">
    <property type="entry name" value="ARM repeat"/>
    <property type="match status" value="1"/>
</dbReference>
<sequence length="222" mass="25423">MGEPSREEYKIQSFDAETQQLLKTALKDPGAVDLEKVANVIVDHSLQDCVFSKEAGRMCYAIIQAESKQAGQSVFRRGLLNRLQQEYQAREQLRARSLQGWVCYVTFICNIFDYLRVNNMPMMALVNPVYDCLFRLAQPDSLSKEEEVDCLVLQLHRVGEQLEKMNGQRMDELFVLIRDGFLLPTGLSSLAQLLLLEIIEFRAAGWKTTPAAHKYYYSEVSD</sequence>
<name>MI4GD_HUMAN</name>
<reference key="1">
    <citation type="journal article" date="2008" name="Mol. Cell. Biol.">
        <title>SLIP1, a factor required for activation of histone mRNA translation by the stem-loop binding protein.</title>
        <authorList>
            <person name="Cakmakci N.G."/>
            <person name="Lerner R.S."/>
            <person name="Wagner E.J."/>
            <person name="Zheng L."/>
            <person name="Marzluff W.F."/>
        </authorList>
    </citation>
    <scope>NUCLEOTIDE SEQUENCE [MRNA] (ISOFORM 1)</scope>
    <scope>FUNCTION</scope>
    <scope>INTERACTION WITH EIF4G1; EIF4G2 AND SLBP</scope>
    <scope>SUBCELLULAR LOCATION</scope>
    <source>
        <tissue>Cervix carcinoma</tissue>
    </source>
</reference>
<reference key="2">
    <citation type="submission" date="2003-04" db="EMBL/GenBank/DDBJ databases">
        <title>Full-length cDNA libraries and normalization.</title>
        <authorList>
            <person name="Li W.B."/>
            <person name="Gruber C."/>
            <person name="Jessee J."/>
            <person name="Polayes D."/>
        </authorList>
    </citation>
    <scope>NUCLEOTIDE SEQUENCE [LARGE SCALE MRNA] (ISOFORM 3)</scope>
    <source>
        <tissue>Cervix carcinoma</tissue>
    </source>
</reference>
<reference key="3">
    <citation type="journal article" date="2004" name="Nat. Genet.">
        <title>Complete sequencing and characterization of 21,243 full-length human cDNAs.</title>
        <authorList>
            <person name="Ota T."/>
            <person name="Suzuki Y."/>
            <person name="Nishikawa T."/>
            <person name="Otsuki T."/>
            <person name="Sugiyama T."/>
            <person name="Irie R."/>
            <person name="Wakamatsu A."/>
            <person name="Hayashi K."/>
            <person name="Sato H."/>
            <person name="Nagai K."/>
            <person name="Kimura K."/>
            <person name="Makita H."/>
            <person name="Sekine M."/>
            <person name="Obayashi M."/>
            <person name="Nishi T."/>
            <person name="Shibahara T."/>
            <person name="Tanaka T."/>
            <person name="Ishii S."/>
            <person name="Yamamoto J."/>
            <person name="Saito K."/>
            <person name="Kawai Y."/>
            <person name="Isono Y."/>
            <person name="Nakamura Y."/>
            <person name="Nagahari K."/>
            <person name="Murakami K."/>
            <person name="Yasuda T."/>
            <person name="Iwayanagi T."/>
            <person name="Wagatsuma M."/>
            <person name="Shiratori A."/>
            <person name="Sudo H."/>
            <person name="Hosoiri T."/>
            <person name="Kaku Y."/>
            <person name="Kodaira H."/>
            <person name="Kondo H."/>
            <person name="Sugawara M."/>
            <person name="Takahashi M."/>
            <person name="Kanda K."/>
            <person name="Yokoi T."/>
            <person name="Furuya T."/>
            <person name="Kikkawa E."/>
            <person name="Omura Y."/>
            <person name="Abe K."/>
            <person name="Kamihara K."/>
            <person name="Katsuta N."/>
            <person name="Sato K."/>
            <person name="Tanikawa M."/>
            <person name="Yamazaki M."/>
            <person name="Ninomiya K."/>
            <person name="Ishibashi T."/>
            <person name="Yamashita H."/>
            <person name="Murakawa K."/>
            <person name="Fujimori K."/>
            <person name="Tanai H."/>
            <person name="Kimata M."/>
            <person name="Watanabe M."/>
            <person name="Hiraoka S."/>
            <person name="Chiba Y."/>
            <person name="Ishida S."/>
            <person name="Ono Y."/>
            <person name="Takiguchi S."/>
            <person name="Watanabe S."/>
            <person name="Yosida M."/>
            <person name="Hotuta T."/>
            <person name="Kusano J."/>
            <person name="Kanehori K."/>
            <person name="Takahashi-Fujii A."/>
            <person name="Hara H."/>
            <person name="Tanase T.-O."/>
            <person name="Nomura Y."/>
            <person name="Togiya S."/>
            <person name="Komai F."/>
            <person name="Hara R."/>
            <person name="Takeuchi K."/>
            <person name="Arita M."/>
            <person name="Imose N."/>
            <person name="Musashino K."/>
            <person name="Yuuki H."/>
            <person name="Oshima A."/>
            <person name="Sasaki N."/>
            <person name="Aotsuka S."/>
            <person name="Yoshikawa Y."/>
            <person name="Matsunawa H."/>
            <person name="Ichihara T."/>
            <person name="Shiohata N."/>
            <person name="Sano S."/>
            <person name="Moriya S."/>
            <person name="Momiyama H."/>
            <person name="Satoh N."/>
            <person name="Takami S."/>
            <person name="Terashima Y."/>
            <person name="Suzuki O."/>
            <person name="Nakagawa S."/>
            <person name="Senoh A."/>
            <person name="Mizoguchi H."/>
            <person name="Goto Y."/>
            <person name="Shimizu F."/>
            <person name="Wakebe H."/>
            <person name="Hishigaki H."/>
            <person name="Watanabe T."/>
            <person name="Sugiyama A."/>
            <person name="Takemoto M."/>
            <person name="Kawakami B."/>
            <person name="Yamazaki M."/>
            <person name="Watanabe K."/>
            <person name="Kumagai A."/>
            <person name="Itakura S."/>
            <person name="Fukuzumi Y."/>
            <person name="Fujimori Y."/>
            <person name="Komiyama M."/>
            <person name="Tashiro H."/>
            <person name="Tanigami A."/>
            <person name="Fujiwara T."/>
            <person name="Ono T."/>
            <person name="Yamada K."/>
            <person name="Fujii Y."/>
            <person name="Ozaki K."/>
            <person name="Hirao M."/>
            <person name="Ohmori Y."/>
            <person name="Kawabata A."/>
            <person name="Hikiji T."/>
            <person name="Kobatake N."/>
            <person name="Inagaki H."/>
            <person name="Ikema Y."/>
            <person name="Okamoto S."/>
            <person name="Okitani R."/>
            <person name="Kawakami T."/>
            <person name="Noguchi S."/>
            <person name="Itoh T."/>
            <person name="Shigeta K."/>
            <person name="Senba T."/>
            <person name="Matsumura K."/>
            <person name="Nakajima Y."/>
            <person name="Mizuno T."/>
            <person name="Morinaga M."/>
            <person name="Sasaki M."/>
            <person name="Togashi T."/>
            <person name="Oyama M."/>
            <person name="Hata H."/>
            <person name="Watanabe M."/>
            <person name="Komatsu T."/>
            <person name="Mizushima-Sugano J."/>
            <person name="Satoh T."/>
            <person name="Shirai Y."/>
            <person name="Takahashi Y."/>
            <person name="Nakagawa K."/>
            <person name="Okumura K."/>
            <person name="Nagase T."/>
            <person name="Nomura N."/>
            <person name="Kikuchi H."/>
            <person name="Masuho Y."/>
            <person name="Yamashita R."/>
            <person name="Nakai K."/>
            <person name="Yada T."/>
            <person name="Nakamura Y."/>
            <person name="Ohara O."/>
            <person name="Isogai T."/>
            <person name="Sugano S."/>
        </authorList>
    </citation>
    <scope>NUCLEOTIDE SEQUENCE [LARGE SCALE MRNA] (ISOFORM 3)</scope>
    <source>
        <tissue>Skeletal muscle</tissue>
    </source>
</reference>
<reference key="4">
    <citation type="journal article" date="2006" name="Nature">
        <title>DNA sequence of human chromosome 17 and analysis of rearrangement in the human lineage.</title>
        <authorList>
            <person name="Zody M.C."/>
            <person name="Garber M."/>
            <person name="Adams D.J."/>
            <person name="Sharpe T."/>
            <person name="Harrow J."/>
            <person name="Lupski J.R."/>
            <person name="Nicholson C."/>
            <person name="Searle S.M."/>
            <person name="Wilming L."/>
            <person name="Young S.K."/>
            <person name="Abouelleil A."/>
            <person name="Allen N.R."/>
            <person name="Bi W."/>
            <person name="Bloom T."/>
            <person name="Borowsky M.L."/>
            <person name="Bugalter B.E."/>
            <person name="Butler J."/>
            <person name="Chang J.L."/>
            <person name="Chen C.-K."/>
            <person name="Cook A."/>
            <person name="Corum B."/>
            <person name="Cuomo C.A."/>
            <person name="de Jong P.J."/>
            <person name="DeCaprio D."/>
            <person name="Dewar K."/>
            <person name="FitzGerald M."/>
            <person name="Gilbert J."/>
            <person name="Gibson R."/>
            <person name="Gnerre S."/>
            <person name="Goldstein S."/>
            <person name="Grafham D.V."/>
            <person name="Grocock R."/>
            <person name="Hafez N."/>
            <person name="Hagopian D.S."/>
            <person name="Hart E."/>
            <person name="Norman C.H."/>
            <person name="Humphray S."/>
            <person name="Jaffe D.B."/>
            <person name="Jones M."/>
            <person name="Kamal M."/>
            <person name="Khodiyar V.K."/>
            <person name="LaButti K."/>
            <person name="Laird G."/>
            <person name="Lehoczky J."/>
            <person name="Liu X."/>
            <person name="Lokyitsang T."/>
            <person name="Loveland J."/>
            <person name="Lui A."/>
            <person name="Macdonald P."/>
            <person name="Major J.E."/>
            <person name="Matthews L."/>
            <person name="Mauceli E."/>
            <person name="McCarroll S.A."/>
            <person name="Mihalev A.H."/>
            <person name="Mudge J."/>
            <person name="Nguyen C."/>
            <person name="Nicol R."/>
            <person name="O'Leary S.B."/>
            <person name="Osoegawa K."/>
            <person name="Schwartz D.C."/>
            <person name="Shaw-Smith C."/>
            <person name="Stankiewicz P."/>
            <person name="Steward C."/>
            <person name="Swarbreck D."/>
            <person name="Venkataraman V."/>
            <person name="Whittaker C.A."/>
            <person name="Yang X."/>
            <person name="Zimmer A.R."/>
            <person name="Bradley A."/>
            <person name="Hubbard T."/>
            <person name="Birren B.W."/>
            <person name="Rogers J."/>
            <person name="Lander E.S."/>
            <person name="Nusbaum C."/>
        </authorList>
    </citation>
    <scope>NUCLEOTIDE SEQUENCE [LARGE SCALE GENOMIC DNA]</scope>
</reference>
<reference key="5">
    <citation type="submission" date="2005-07" db="EMBL/GenBank/DDBJ databases">
        <authorList>
            <person name="Mural R.J."/>
            <person name="Istrail S."/>
            <person name="Sutton G.G."/>
            <person name="Florea L."/>
            <person name="Halpern A.L."/>
            <person name="Mobarry C.M."/>
            <person name="Lippert R."/>
            <person name="Walenz B."/>
            <person name="Shatkay H."/>
            <person name="Dew I."/>
            <person name="Miller J.R."/>
            <person name="Flanigan M.J."/>
            <person name="Edwards N.J."/>
            <person name="Bolanos R."/>
            <person name="Fasulo D."/>
            <person name="Halldorsson B.V."/>
            <person name="Hannenhalli S."/>
            <person name="Turner R."/>
            <person name="Yooseph S."/>
            <person name="Lu F."/>
            <person name="Nusskern D.R."/>
            <person name="Shue B.C."/>
            <person name="Zheng X.H."/>
            <person name="Zhong F."/>
            <person name="Delcher A.L."/>
            <person name="Huson D.H."/>
            <person name="Kravitz S.A."/>
            <person name="Mouchard L."/>
            <person name="Reinert K."/>
            <person name="Remington K.A."/>
            <person name="Clark A.G."/>
            <person name="Waterman M.S."/>
            <person name="Eichler E.E."/>
            <person name="Adams M.D."/>
            <person name="Hunkapiller M.W."/>
            <person name="Myers E.W."/>
            <person name="Venter J.C."/>
        </authorList>
    </citation>
    <scope>NUCLEOTIDE SEQUENCE [LARGE SCALE GENOMIC DNA]</scope>
</reference>
<reference key="6">
    <citation type="journal article" date="2004" name="Genome Res.">
        <title>The status, quality, and expansion of the NIH full-length cDNA project: the Mammalian Gene Collection (MGC).</title>
        <authorList>
            <consortium name="The MGC Project Team"/>
        </authorList>
    </citation>
    <scope>NUCLEOTIDE SEQUENCE [LARGE SCALE MRNA] (ISOFORM 2)</scope>
    <source>
        <tissue>Blood</tissue>
    </source>
</reference>
<reference key="7">
    <citation type="submission" date="2000-01" db="EMBL/GenBank/DDBJ databases">
        <authorList>
            <person name="Xiao H."/>
            <person name="Song H."/>
            <person name="Gao G."/>
            <person name="Ren S."/>
            <person name="Chen Z."/>
            <person name="Han Z."/>
        </authorList>
    </citation>
    <scope>NUCLEOTIDE SEQUENCE [MRNA] OF 1-164 (ISOFORM 1)</scope>
    <source>
        <tissue>Adrenal gland</tissue>
    </source>
</reference>
<reference key="8">
    <citation type="journal article" date="2011" name="BMC Syst. Biol.">
        <title>Initial characterization of the human central proteome.</title>
        <authorList>
            <person name="Burkard T.R."/>
            <person name="Planyavsky M."/>
            <person name="Kaupe I."/>
            <person name="Breitwieser F.P."/>
            <person name="Buerckstuemmer T."/>
            <person name="Bennett K.L."/>
            <person name="Superti-Furga G."/>
            <person name="Colinge J."/>
        </authorList>
    </citation>
    <scope>IDENTIFICATION BY MASS SPECTROMETRY [LARGE SCALE ANALYSIS]</scope>
</reference>
<organism>
    <name type="scientific">Homo sapiens</name>
    <name type="common">Human</name>
    <dbReference type="NCBI Taxonomy" id="9606"/>
    <lineage>
        <taxon>Eukaryota</taxon>
        <taxon>Metazoa</taxon>
        <taxon>Chordata</taxon>
        <taxon>Craniata</taxon>
        <taxon>Vertebrata</taxon>
        <taxon>Euteleostomi</taxon>
        <taxon>Mammalia</taxon>
        <taxon>Eutheria</taxon>
        <taxon>Euarchontoglires</taxon>
        <taxon>Primates</taxon>
        <taxon>Haplorrhini</taxon>
        <taxon>Catarrhini</taxon>
        <taxon>Hominidae</taxon>
        <taxon>Homo</taxon>
    </lineage>
</organism>
<evidence type="ECO:0000269" key="1">
    <source>
    </source>
</evidence>
<evidence type="ECO:0000303" key="2">
    <source>
    </source>
</evidence>
<evidence type="ECO:0000303" key="3">
    <source>
    </source>
</evidence>
<evidence type="ECO:0000303" key="4">
    <source ref="2"/>
</evidence>
<evidence type="ECO:0000305" key="5"/>